<reference key="1">
    <citation type="journal article" date="2006" name="DNA Res.">
        <title>Genome sequence of the cat pathogen, Chlamydophila felis.</title>
        <authorList>
            <person name="Azuma Y."/>
            <person name="Hirakawa H."/>
            <person name="Yamashita A."/>
            <person name="Cai Y."/>
            <person name="Rahman M.A."/>
            <person name="Suzuki H."/>
            <person name="Mitaku S."/>
            <person name="Toh H."/>
            <person name="Goto S."/>
            <person name="Murakami T."/>
            <person name="Sugi K."/>
            <person name="Hayashi H."/>
            <person name="Fukushi H."/>
            <person name="Hattori M."/>
            <person name="Kuhara S."/>
            <person name="Shirai M."/>
        </authorList>
    </citation>
    <scope>NUCLEOTIDE SEQUENCE [LARGE SCALE GENOMIC DNA]</scope>
    <source>
        <strain>Fe/C-56</strain>
    </source>
</reference>
<sequence>MTSAWSNEIQHEGLKQWIQEVAELVTPEDIRVCNGSDSEYAEVYSIMQKSGVAIPLNSDLHPNCFLVRSSPEDVARVEKFTFICTAKKEEAGPTNNWRDPQEMRQELQGLFRGCMRGRTLYVVPFCMGPLNSPFSLIGVELTDSPYVVCSMKIMTRMGAEVLKSLGTSGTFHKCLHSVGVPLSPGEKDVAWPCNPEHMRIVHFQDDSSVMSFGSGYGGNALLGKKCVALRLASYIARSKNWLAEHMLIIGVTNPEGQKKYFAASFPSACGKTNLAMLKPKIPGWKIECIGDDIAWIRPGSDGRLYAVNPEYGFFGVAPGTSEKTNPNALATCRSNSIFTNVALTPDGDVWWEGLTSQPPAGLIDWRGNPWQPGGTPAAHPNSRFTTPLQQCPVLDSQWNSSEGVPLEAIIFGGRRSDTIPLVYEALSWQHGVTIGASMSSATTAAIVGEQGKLRHDPFAMLPFCGYNMALYFDHWLSFASNASLKLPKIYGVNWFRKDKDGNFIWPGFSENLRVLEWIFRRTNGEESIAKRTPIGYLPEESSLNLEGLNLSSQALQDLLAVDVPGWLKEVADVREYCKIFGSDLPQIISDELFRIERELK</sequence>
<protein>
    <recommendedName>
        <fullName evidence="1">Phosphoenolpyruvate carboxykinase [GTP]</fullName>
        <shortName evidence="1">PEP carboxykinase</shortName>
        <shortName evidence="1">PEPCK</shortName>
        <ecNumber evidence="1">4.1.1.32</ecNumber>
    </recommendedName>
</protein>
<organism>
    <name type="scientific">Chlamydia felis (strain Fe/C-56)</name>
    <name type="common">Chlamydophila felis</name>
    <dbReference type="NCBI Taxonomy" id="264202"/>
    <lineage>
        <taxon>Bacteria</taxon>
        <taxon>Pseudomonadati</taxon>
        <taxon>Chlamydiota</taxon>
        <taxon>Chlamydiia</taxon>
        <taxon>Chlamydiales</taxon>
        <taxon>Chlamydiaceae</taxon>
        <taxon>Chlamydia/Chlamydophila group</taxon>
        <taxon>Chlamydia</taxon>
    </lineage>
</organism>
<comment type="function">
    <text evidence="1">Catalyzes the conversion of oxaloacetate (OAA) to phosphoenolpyruvate (PEP), the rate-limiting step in the metabolic pathway that produces glucose from lactate and other precursors derived from the citric acid cycle.</text>
</comment>
<comment type="catalytic activity">
    <reaction evidence="1">
        <text>oxaloacetate + GTP = phosphoenolpyruvate + GDP + CO2</text>
        <dbReference type="Rhea" id="RHEA:10388"/>
        <dbReference type="ChEBI" id="CHEBI:16452"/>
        <dbReference type="ChEBI" id="CHEBI:16526"/>
        <dbReference type="ChEBI" id="CHEBI:37565"/>
        <dbReference type="ChEBI" id="CHEBI:58189"/>
        <dbReference type="ChEBI" id="CHEBI:58702"/>
        <dbReference type="EC" id="4.1.1.32"/>
    </reaction>
</comment>
<comment type="cofactor">
    <cofactor evidence="1">
        <name>Mn(2+)</name>
        <dbReference type="ChEBI" id="CHEBI:29035"/>
    </cofactor>
    <text evidence="1">Binds 1 Mn(2+) ion per subunit.</text>
</comment>
<comment type="pathway">
    <text evidence="1">Carbohydrate biosynthesis; gluconeogenesis.</text>
</comment>
<comment type="subunit">
    <text evidence="1">Monomer.</text>
</comment>
<comment type="subcellular location">
    <subcellularLocation>
        <location evidence="1">Cytoplasm</location>
    </subcellularLocation>
</comment>
<comment type="similarity">
    <text evidence="1">Belongs to the phosphoenolpyruvate carboxykinase [GTP] family.</text>
</comment>
<feature type="chain" id="PRO_1000080984" description="Phosphoenolpyruvate carboxykinase [GTP]">
    <location>
        <begin position="1"/>
        <end position="600"/>
    </location>
</feature>
<feature type="active site" evidence="1">
    <location>
        <position position="269"/>
    </location>
</feature>
<feature type="binding site" evidence="1">
    <location>
        <position position="76"/>
    </location>
    <ligand>
        <name>substrate</name>
    </ligand>
</feature>
<feature type="binding site" evidence="1">
    <location>
        <begin position="216"/>
        <end position="218"/>
    </location>
    <ligand>
        <name>substrate</name>
    </ligand>
</feature>
<feature type="binding site" evidence="1">
    <location>
        <position position="225"/>
    </location>
    <ligand>
        <name>Mn(2+)</name>
        <dbReference type="ChEBI" id="CHEBI:29035"/>
    </ligand>
</feature>
<feature type="binding site" evidence="1">
    <location>
        <position position="245"/>
    </location>
    <ligand>
        <name>Mn(2+)</name>
        <dbReference type="ChEBI" id="CHEBI:29035"/>
    </ligand>
</feature>
<feature type="binding site" evidence="1">
    <location>
        <position position="267"/>
    </location>
    <ligand>
        <name>substrate</name>
    </ligand>
</feature>
<feature type="binding site" evidence="1">
    <location>
        <begin position="268"/>
        <end position="273"/>
    </location>
    <ligand>
        <name>GTP</name>
        <dbReference type="ChEBI" id="CHEBI:37565"/>
    </ligand>
</feature>
<feature type="binding site" evidence="1">
    <location>
        <position position="292"/>
    </location>
    <ligand>
        <name>Mn(2+)</name>
        <dbReference type="ChEBI" id="CHEBI:29035"/>
    </ligand>
</feature>
<feature type="binding site" evidence="1">
    <location>
        <begin position="381"/>
        <end position="383"/>
    </location>
    <ligand>
        <name>substrate</name>
    </ligand>
</feature>
<feature type="binding site" evidence="1">
    <location>
        <position position="383"/>
    </location>
    <ligand>
        <name>GTP</name>
        <dbReference type="ChEBI" id="CHEBI:37565"/>
    </ligand>
</feature>
<feature type="binding site" evidence="1">
    <location>
        <position position="414"/>
    </location>
    <ligand>
        <name>GTP</name>
        <dbReference type="ChEBI" id="CHEBI:37565"/>
    </ligand>
</feature>
<feature type="binding site" evidence="1">
    <location>
        <begin position="508"/>
        <end position="511"/>
    </location>
    <ligand>
        <name>GTP</name>
        <dbReference type="ChEBI" id="CHEBI:37565"/>
    </ligand>
</feature>
<accession>Q256B8</accession>
<name>PCKG_CHLFF</name>
<evidence type="ECO:0000255" key="1">
    <source>
        <dbReference type="HAMAP-Rule" id="MF_00452"/>
    </source>
</evidence>
<dbReference type="EC" id="4.1.1.32" evidence="1"/>
<dbReference type="EMBL" id="AP006861">
    <property type="protein sequence ID" value="BAE80870.1"/>
    <property type="molecule type" value="Genomic_DNA"/>
</dbReference>
<dbReference type="RefSeq" id="WP_011457655.1">
    <property type="nucleotide sequence ID" value="NC_007899.1"/>
</dbReference>
<dbReference type="SMR" id="Q256B8"/>
<dbReference type="STRING" id="264202.CF0098"/>
<dbReference type="KEGG" id="cfe:CF0098"/>
<dbReference type="eggNOG" id="COG1274">
    <property type="taxonomic scope" value="Bacteria"/>
</dbReference>
<dbReference type="HOGENOM" id="CLU_028872_1_1_0"/>
<dbReference type="OrthoDB" id="9758871at2"/>
<dbReference type="UniPathway" id="UPA00138"/>
<dbReference type="Proteomes" id="UP000001260">
    <property type="component" value="Chromosome"/>
</dbReference>
<dbReference type="GO" id="GO:0005829">
    <property type="term" value="C:cytosol"/>
    <property type="evidence" value="ECO:0007669"/>
    <property type="project" value="TreeGrafter"/>
</dbReference>
<dbReference type="GO" id="GO:0005525">
    <property type="term" value="F:GTP binding"/>
    <property type="evidence" value="ECO:0007669"/>
    <property type="project" value="UniProtKB-UniRule"/>
</dbReference>
<dbReference type="GO" id="GO:0030145">
    <property type="term" value="F:manganese ion binding"/>
    <property type="evidence" value="ECO:0007669"/>
    <property type="project" value="UniProtKB-UniRule"/>
</dbReference>
<dbReference type="GO" id="GO:0004613">
    <property type="term" value="F:phosphoenolpyruvate carboxykinase (GTP) activity"/>
    <property type="evidence" value="ECO:0007669"/>
    <property type="project" value="UniProtKB-UniRule"/>
</dbReference>
<dbReference type="GO" id="GO:0071333">
    <property type="term" value="P:cellular response to glucose stimulus"/>
    <property type="evidence" value="ECO:0007669"/>
    <property type="project" value="TreeGrafter"/>
</dbReference>
<dbReference type="GO" id="GO:0006094">
    <property type="term" value="P:gluconeogenesis"/>
    <property type="evidence" value="ECO:0007669"/>
    <property type="project" value="UniProtKB-UniRule"/>
</dbReference>
<dbReference type="GO" id="GO:0046327">
    <property type="term" value="P:glycerol biosynthetic process from pyruvate"/>
    <property type="evidence" value="ECO:0007669"/>
    <property type="project" value="TreeGrafter"/>
</dbReference>
<dbReference type="GO" id="GO:0006107">
    <property type="term" value="P:oxaloacetate metabolic process"/>
    <property type="evidence" value="ECO:0007669"/>
    <property type="project" value="TreeGrafter"/>
</dbReference>
<dbReference type="GO" id="GO:0019543">
    <property type="term" value="P:propionate catabolic process"/>
    <property type="evidence" value="ECO:0007669"/>
    <property type="project" value="TreeGrafter"/>
</dbReference>
<dbReference type="GO" id="GO:0033993">
    <property type="term" value="P:response to lipid"/>
    <property type="evidence" value="ECO:0007669"/>
    <property type="project" value="TreeGrafter"/>
</dbReference>
<dbReference type="GO" id="GO:0042594">
    <property type="term" value="P:response to starvation"/>
    <property type="evidence" value="ECO:0007669"/>
    <property type="project" value="TreeGrafter"/>
</dbReference>
<dbReference type="CDD" id="cd00819">
    <property type="entry name" value="PEPCK_GTP"/>
    <property type="match status" value="1"/>
</dbReference>
<dbReference type="FunFam" id="3.40.449.10:FF:000005">
    <property type="entry name" value="Phosphoenolpyruvate carboxykinase [GTP]"/>
    <property type="match status" value="1"/>
</dbReference>
<dbReference type="Gene3D" id="3.90.228.20">
    <property type="match status" value="1"/>
</dbReference>
<dbReference type="Gene3D" id="3.40.449.10">
    <property type="entry name" value="Phosphoenolpyruvate Carboxykinase, domain 1"/>
    <property type="match status" value="1"/>
</dbReference>
<dbReference type="Gene3D" id="2.170.8.10">
    <property type="entry name" value="Phosphoenolpyruvate Carboxykinase, domain 2"/>
    <property type="match status" value="1"/>
</dbReference>
<dbReference type="HAMAP" id="MF_00452">
    <property type="entry name" value="PEPCK_GTP"/>
    <property type="match status" value="1"/>
</dbReference>
<dbReference type="InterPro" id="IPR018091">
    <property type="entry name" value="PEP_carboxykin_GTP_CS"/>
</dbReference>
<dbReference type="InterPro" id="IPR013035">
    <property type="entry name" value="PEP_carboxykinase_C"/>
</dbReference>
<dbReference type="InterPro" id="IPR008209">
    <property type="entry name" value="PEP_carboxykinase_GTP"/>
</dbReference>
<dbReference type="InterPro" id="IPR035077">
    <property type="entry name" value="PEP_carboxykinase_GTP_C"/>
</dbReference>
<dbReference type="InterPro" id="IPR035078">
    <property type="entry name" value="PEP_carboxykinase_GTP_N"/>
</dbReference>
<dbReference type="InterPro" id="IPR008210">
    <property type="entry name" value="PEP_carboxykinase_N"/>
</dbReference>
<dbReference type="NCBIfam" id="NF003253">
    <property type="entry name" value="PRK04210.1"/>
    <property type="match status" value="1"/>
</dbReference>
<dbReference type="PANTHER" id="PTHR11561">
    <property type="entry name" value="PHOSPHOENOLPYRUVATE CARBOXYKINASE"/>
    <property type="match status" value="1"/>
</dbReference>
<dbReference type="PANTHER" id="PTHR11561:SF0">
    <property type="entry name" value="PHOSPHOENOLPYRUVATE CARBOXYKINASE [GTP]-RELATED"/>
    <property type="match status" value="1"/>
</dbReference>
<dbReference type="Pfam" id="PF00821">
    <property type="entry name" value="PEPCK_GTP"/>
    <property type="match status" value="1"/>
</dbReference>
<dbReference type="Pfam" id="PF17297">
    <property type="entry name" value="PEPCK_N"/>
    <property type="match status" value="1"/>
</dbReference>
<dbReference type="PIRSF" id="PIRSF001348">
    <property type="entry name" value="PEP_carboxykinase_GTP"/>
    <property type="match status" value="1"/>
</dbReference>
<dbReference type="SUPFAM" id="SSF68923">
    <property type="entry name" value="PEP carboxykinase N-terminal domain"/>
    <property type="match status" value="1"/>
</dbReference>
<dbReference type="SUPFAM" id="SSF53795">
    <property type="entry name" value="PEP carboxykinase-like"/>
    <property type="match status" value="1"/>
</dbReference>
<dbReference type="PROSITE" id="PS00505">
    <property type="entry name" value="PEPCK_GTP"/>
    <property type="match status" value="1"/>
</dbReference>
<keyword id="KW-0963">Cytoplasm</keyword>
<keyword id="KW-0210">Decarboxylase</keyword>
<keyword id="KW-0312">Gluconeogenesis</keyword>
<keyword id="KW-0342">GTP-binding</keyword>
<keyword id="KW-0456">Lyase</keyword>
<keyword id="KW-0464">Manganese</keyword>
<keyword id="KW-0479">Metal-binding</keyword>
<keyword id="KW-0547">Nucleotide-binding</keyword>
<proteinExistence type="inferred from homology"/>
<gene>
    <name evidence="1" type="primary">pckG</name>
    <name type="ordered locus">CF0098</name>
</gene>